<dbReference type="EC" id="5.3.1.9" evidence="1"/>
<dbReference type="EMBL" id="BA000028">
    <property type="protein sequence ID" value="BAC14292.1"/>
    <property type="molecule type" value="Genomic_DNA"/>
</dbReference>
<dbReference type="RefSeq" id="WP_011066729.1">
    <property type="nucleotide sequence ID" value="NC_004193.1"/>
</dbReference>
<dbReference type="SMR" id="Q8ENY8"/>
<dbReference type="STRING" id="221109.gene:10734587"/>
<dbReference type="KEGG" id="oih:OB2336"/>
<dbReference type="eggNOG" id="COG0166">
    <property type="taxonomic scope" value="Bacteria"/>
</dbReference>
<dbReference type="HOGENOM" id="CLU_037303_0_1_9"/>
<dbReference type="OrthoDB" id="140919at2"/>
<dbReference type="PhylomeDB" id="Q8ENY8"/>
<dbReference type="UniPathway" id="UPA00109">
    <property type="reaction ID" value="UER00181"/>
</dbReference>
<dbReference type="UniPathway" id="UPA00138"/>
<dbReference type="Proteomes" id="UP000000822">
    <property type="component" value="Chromosome"/>
</dbReference>
<dbReference type="GO" id="GO:0005829">
    <property type="term" value="C:cytosol"/>
    <property type="evidence" value="ECO:0007669"/>
    <property type="project" value="TreeGrafter"/>
</dbReference>
<dbReference type="GO" id="GO:0097367">
    <property type="term" value="F:carbohydrate derivative binding"/>
    <property type="evidence" value="ECO:0007669"/>
    <property type="project" value="InterPro"/>
</dbReference>
<dbReference type="GO" id="GO:0004347">
    <property type="term" value="F:glucose-6-phosphate isomerase activity"/>
    <property type="evidence" value="ECO:0007669"/>
    <property type="project" value="UniProtKB-UniRule"/>
</dbReference>
<dbReference type="GO" id="GO:0048029">
    <property type="term" value="F:monosaccharide binding"/>
    <property type="evidence" value="ECO:0007669"/>
    <property type="project" value="TreeGrafter"/>
</dbReference>
<dbReference type="GO" id="GO:0006094">
    <property type="term" value="P:gluconeogenesis"/>
    <property type="evidence" value="ECO:0007669"/>
    <property type="project" value="UniProtKB-UniRule"/>
</dbReference>
<dbReference type="GO" id="GO:0051156">
    <property type="term" value="P:glucose 6-phosphate metabolic process"/>
    <property type="evidence" value="ECO:0007669"/>
    <property type="project" value="TreeGrafter"/>
</dbReference>
<dbReference type="GO" id="GO:0006096">
    <property type="term" value="P:glycolytic process"/>
    <property type="evidence" value="ECO:0007669"/>
    <property type="project" value="UniProtKB-UniRule"/>
</dbReference>
<dbReference type="CDD" id="cd05015">
    <property type="entry name" value="SIS_PGI_1"/>
    <property type="match status" value="1"/>
</dbReference>
<dbReference type="CDD" id="cd05016">
    <property type="entry name" value="SIS_PGI_2"/>
    <property type="match status" value="1"/>
</dbReference>
<dbReference type="FunFam" id="3.40.50.10490:FF:000015">
    <property type="entry name" value="Glucose-6-phosphate isomerase"/>
    <property type="match status" value="1"/>
</dbReference>
<dbReference type="FunFam" id="3.40.50.10490:FF:000016">
    <property type="entry name" value="Glucose-6-phosphate isomerase"/>
    <property type="match status" value="1"/>
</dbReference>
<dbReference type="Gene3D" id="3.40.50.10490">
    <property type="entry name" value="Glucose-6-phosphate isomerase like protein, domain 1"/>
    <property type="match status" value="3"/>
</dbReference>
<dbReference type="HAMAP" id="MF_00473">
    <property type="entry name" value="G6P_isomerase"/>
    <property type="match status" value="1"/>
</dbReference>
<dbReference type="InterPro" id="IPR001672">
    <property type="entry name" value="G6P_Isomerase"/>
</dbReference>
<dbReference type="InterPro" id="IPR018189">
    <property type="entry name" value="Phosphoglucose_isomerase_CS"/>
</dbReference>
<dbReference type="InterPro" id="IPR046348">
    <property type="entry name" value="SIS_dom_sf"/>
</dbReference>
<dbReference type="InterPro" id="IPR035476">
    <property type="entry name" value="SIS_PGI_1"/>
</dbReference>
<dbReference type="InterPro" id="IPR035482">
    <property type="entry name" value="SIS_PGI_2"/>
</dbReference>
<dbReference type="NCBIfam" id="NF010697">
    <property type="entry name" value="PRK14097.1"/>
    <property type="match status" value="1"/>
</dbReference>
<dbReference type="PANTHER" id="PTHR11469">
    <property type="entry name" value="GLUCOSE-6-PHOSPHATE ISOMERASE"/>
    <property type="match status" value="1"/>
</dbReference>
<dbReference type="PANTHER" id="PTHR11469:SF1">
    <property type="entry name" value="GLUCOSE-6-PHOSPHATE ISOMERASE"/>
    <property type="match status" value="1"/>
</dbReference>
<dbReference type="Pfam" id="PF00342">
    <property type="entry name" value="PGI"/>
    <property type="match status" value="1"/>
</dbReference>
<dbReference type="PRINTS" id="PR00662">
    <property type="entry name" value="G6PISOMERASE"/>
</dbReference>
<dbReference type="SUPFAM" id="SSF53697">
    <property type="entry name" value="SIS domain"/>
    <property type="match status" value="1"/>
</dbReference>
<dbReference type="PROSITE" id="PS00765">
    <property type="entry name" value="P_GLUCOSE_ISOMERASE_1"/>
    <property type="match status" value="1"/>
</dbReference>
<dbReference type="PROSITE" id="PS00174">
    <property type="entry name" value="P_GLUCOSE_ISOMERASE_2"/>
    <property type="match status" value="1"/>
</dbReference>
<dbReference type="PROSITE" id="PS51463">
    <property type="entry name" value="P_GLUCOSE_ISOMERASE_3"/>
    <property type="match status" value="1"/>
</dbReference>
<reference key="1">
    <citation type="journal article" date="2002" name="Nucleic Acids Res.">
        <title>Genome sequence of Oceanobacillus iheyensis isolated from the Iheya Ridge and its unexpected adaptive capabilities to extreme environments.</title>
        <authorList>
            <person name="Takami H."/>
            <person name="Takaki Y."/>
            <person name="Uchiyama I."/>
        </authorList>
    </citation>
    <scope>NUCLEOTIDE SEQUENCE [LARGE SCALE GENOMIC DNA]</scope>
    <source>
        <strain>DSM 14371 / CIP 107618 / JCM 11309 / KCTC 3954 / HTE831</strain>
    </source>
</reference>
<sequence length="448" mass="50592">MTHVSFNYEKALSFFEKQEITNLEPFVHTAHQMIHERIGAGKDFLGWLDLPRNYNREEYTRIKAAADKIKKDSDILLVIGIGGSYLGAKAALEMLNHSFQNLLSKDQRQVPQIIFVGHHLSSTYMTELFDILKDKDFSINVISKSGTTTEPAIAFRVFKKYLEEKYGQDEAKKRIYATTDRSKGALKTTADSNDYETFVIPDDVGGRYSVLTAVGLLPIAASGINIDDMMEGAKAGMEDLANPVISENPAYQYAAVRNILYQKGKVTELLINYEPNLQYFSEWWKQLFGESEGKNQKGIYPSSANFTTDLHSLGQYIQEGRRNIFETILHVNEPKKDFTLEKEESDLDGLNYLAGKSIHEINDKAFQGTLLAHTDGDVPNLIVEVPRLDAYTFGYLVYFFEKACAISGYILGVNPFDQPGVEAYKKNMFALLGKPGFEDQKEALEKRL</sequence>
<feature type="chain" id="PRO_0000180697" description="Glucose-6-phosphate isomerase">
    <location>
        <begin position="1"/>
        <end position="448"/>
    </location>
</feature>
<feature type="active site" description="Proton donor" evidence="1">
    <location>
        <position position="290"/>
    </location>
</feature>
<feature type="active site" evidence="1">
    <location>
        <position position="311"/>
    </location>
</feature>
<feature type="active site" evidence="1">
    <location>
        <position position="425"/>
    </location>
</feature>
<evidence type="ECO:0000255" key="1">
    <source>
        <dbReference type="HAMAP-Rule" id="MF_00473"/>
    </source>
</evidence>
<keyword id="KW-0963">Cytoplasm</keyword>
<keyword id="KW-0312">Gluconeogenesis</keyword>
<keyword id="KW-0324">Glycolysis</keyword>
<keyword id="KW-0413">Isomerase</keyword>
<keyword id="KW-1185">Reference proteome</keyword>
<proteinExistence type="inferred from homology"/>
<accession>Q8ENY8</accession>
<protein>
    <recommendedName>
        <fullName evidence="1">Glucose-6-phosphate isomerase</fullName>
        <shortName evidence="1">GPI</shortName>
        <ecNumber evidence="1">5.3.1.9</ecNumber>
    </recommendedName>
    <alternativeName>
        <fullName evidence="1">Phosphoglucose isomerase</fullName>
        <shortName evidence="1">PGI</shortName>
    </alternativeName>
    <alternativeName>
        <fullName evidence="1">Phosphohexose isomerase</fullName>
        <shortName evidence="1">PHI</shortName>
    </alternativeName>
</protein>
<name>G6PI_OCEIH</name>
<comment type="function">
    <text evidence="1">Catalyzes the reversible isomerization of glucose-6-phosphate to fructose-6-phosphate.</text>
</comment>
<comment type="catalytic activity">
    <reaction evidence="1">
        <text>alpha-D-glucose 6-phosphate = beta-D-fructose 6-phosphate</text>
        <dbReference type="Rhea" id="RHEA:11816"/>
        <dbReference type="ChEBI" id="CHEBI:57634"/>
        <dbReference type="ChEBI" id="CHEBI:58225"/>
        <dbReference type="EC" id="5.3.1.9"/>
    </reaction>
</comment>
<comment type="pathway">
    <text evidence="1">Carbohydrate biosynthesis; gluconeogenesis.</text>
</comment>
<comment type="pathway">
    <text evidence="1">Carbohydrate degradation; glycolysis; D-glyceraldehyde 3-phosphate and glycerone phosphate from D-glucose: step 2/4.</text>
</comment>
<comment type="subcellular location">
    <subcellularLocation>
        <location evidence="1">Cytoplasm</location>
    </subcellularLocation>
</comment>
<comment type="similarity">
    <text evidence="1">Belongs to the GPI family.</text>
</comment>
<gene>
    <name evidence="1" type="primary">pgi</name>
    <name type="ordered locus">OB2336</name>
</gene>
<organism>
    <name type="scientific">Oceanobacillus iheyensis (strain DSM 14371 / CIP 107618 / JCM 11309 / KCTC 3954 / HTE831)</name>
    <dbReference type="NCBI Taxonomy" id="221109"/>
    <lineage>
        <taxon>Bacteria</taxon>
        <taxon>Bacillati</taxon>
        <taxon>Bacillota</taxon>
        <taxon>Bacilli</taxon>
        <taxon>Bacillales</taxon>
        <taxon>Bacillaceae</taxon>
        <taxon>Oceanobacillus</taxon>
    </lineage>
</organism>